<reference key="1">
    <citation type="journal article" date="2000" name="DNA Res.">
        <title>Complete genome structure of the nitrogen-fixing symbiotic bacterium Mesorhizobium loti.</title>
        <authorList>
            <person name="Kaneko T."/>
            <person name="Nakamura Y."/>
            <person name="Sato S."/>
            <person name="Asamizu E."/>
            <person name="Kato T."/>
            <person name="Sasamoto S."/>
            <person name="Watanabe A."/>
            <person name="Idesawa K."/>
            <person name="Ishikawa A."/>
            <person name="Kawashima K."/>
            <person name="Kimura T."/>
            <person name="Kishida Y."/>
            <person name="Kiyokawa C."/>
            <person name="Kohara M."/>
            <person name="Matsumoto M."/>
            <person name="Matsuno A."/>
            <person name="Mochizuki Y."/>
            <person name="Nakayama S."/>
            <person name="Nakazaki N."/>
            <person name="Shimpo S."/>
            <person name="Sugimoto M."/>
            <person name="Takeuchi C."/>
            <person name="Yamada M."/>
            <person name="Tabata S."/>
        </authorList>
    </citation>
    <scope>NUCLEOTIDE SEQUENCE [LARGE SCALE GENOMIC DNA]</scope>
    <source>
        <strain>LMG 29417 / CECT 9101 / MAFF 303099</strain>
    </source>
</reference>
<organism>
    <name type="scientific">Mesorhizobium japonicum (strain LMG 29417 / CECT 9101 / MAFF 303099)</name>
    <name type="common">Mesorhizobium loti (strain MAFF 303099)</name>
    <dbReference type="NCBI Taxonomy" id="266835"/>
    <lineage>
        <taxon>Bacteria</taxon>
        <taxon>Pseudomonadati</taxon>
        <taxon>Pseudomonadota</taxon>
        <taxon>Alphaproteobacteria</taxon>
        <taxon>Hyphomicrobiales</taxon>
        <taxon>Phyllobacteriaceae</taxon>
        <taxon>Mesorhizobium</taxon>
    </lineage>
</organism>
<proteinExistence type="inferred from homology"/>
<name>CLPP2_RHILO</name>
<comment type="function">
    <text evidence="1">Cleaves peptides in various proteins in a process that requires ATP hydrolysis. Has a chymotrypsin-like activity. Plays a major role in the degradation of misfolded proteins.</text>
</comment>
<comment type="catalytic activity">
    <reaction evidence="1">
        <text>Hydrolysis of proteins to small peptides in the presence of ATP and magnesium. alpha-casein is the usual test substrate. In the absence of ATP, only oligopeptides shorter than five residues are hydrolyzed (such as succinyl-Leu-Tyr-|-NHMec, and Leu-Tyr-Leu-|-Tyr-Trp, in which cleavage of the -Tyr-|-Leu- and -Tyr-|-Trp bonds also occurs).</text>
        <dbReference type="EC" id="3.4.21.92"/>
    </reaction>
</comment>
<comment type="subunit">
    <text evidence="1">Fourteen ClpP subunits assemble into 2 heptameric rings which stack back to back to give a disk-like structure with a central cavity, resembling the structure of eukaryotic proteasomes.</text>
</comment>
<comment type="subcellular location">
    <subcellularLocation>
        <location evidence="1">Cytoplasm</location>
    </subcellularLocation>
</comment>
<comment type="similarity">
    <text evidence="1">Belongs to the peptidase S14 family.</text>
</comment>
<accession>Q982V6</accession>
<keyword id="KW-0963">Cytoplasm</keyword>
<keyword id="KW-0378">Hydrolase</keyword>
<keyword id="KW-0645">Protease</keyword>
<keyword id="KW-0720">Serine protease</keyword>
<evidence type="ECO:0000255" key="1">
    <source>
        <dbReference type="HAMAP-Rule" id="MF_00444"/>
    </source>
</evidence>
<protein>
    <recommendedName>
        <fullName evidence="1">ATP-dependent Clp protease proteolytic subunit 2</fullName>
        <ecNumber evidence="1">3.4.21.92</ecNumber>
    </recommendedName>
    <alternativeName>
        <fullName evidence="1">Endopeptidase Clp 2</fullName>
    </alternativeName>
</protein>
<dbReference type="EC" id="3.4.21.92" evidence="1"/>
<dbReference type="EMBL" id="BA000012">
    <property type="protein sequence ID" value="BAB54350.1"/>
    <property type="molecule type" value="Genomic_DNA"/>
</dbReference>
<dbReference type="SMR" id="Q982V6"/>
<dbReference type="MEROPS" id="S14.001"/>
<dbReference type="KEGG" id="mlo:mlr8472"/>
<dbReference type="eggNOG" id="COG0740">
    <property type="taxonomic scope" value="Bacteria"/>
</dbReference>
<dbReference type="HOGENOM" id="CLU_058707_3_2_5"/>
<dbReference type="Proteomes" id="UP000000552">
    <property type="component" value="Chromosome"/>
</dbReference>
<dbReference type="GO" id="GO:0005737">
    <property type="term" value="C:cytoplasm"/>
    <property type="evidence" value="ECO:0007669"/>
    <property type="project" value="UniProtKB-SubCell"/>
</dbReference>
<dbReference type="GO" id="GO:0009368">
    <property type="term" value="C:endopeptidase Clp complex"/>
    <property type="evidence" value="ECO:0007669"/>
    <property type="project" value="TreeGrafter"/>
</dbReference>
<dbReference type="GO" id="GO:0004176">
    <property type="term" value="F:ATP-dependent peptidase activity"/>
    <property type="evidence" value="ECO:0007669"/>
    <property type="project" value="InterPro"/>
</dbReference>
<dbReference type="GO" id="GO:0051117">
    <property type="term" value="F:ATPase binding"/>
    <property type="evidence" value="ECO:0007669"/>
    <property type="project" value="TreeGrafter"/>
</dbReference>
<dbReference type="GO" id="GO:0004252">
    <property type="term" value="F:serine-type endopeptidase activity"/>
    <property type="evidence" value="ECO:0007669"/>
    <property type="project" value="UniProtKB-UniRule"/>
</dbReference>
<dbReference type="GO" id="GO:0006515">
    <property type="term" value="P:protein quality control for misfolded or incompletely synthesized proteins"/>
    <property type="evidence" value="ECO:0007669"/>
    <property type="project" value="TreeGrafter"/>
</dbReference>
<dbReference type="CDD" id="cd07017">
    <property type="entry name" value="S14_ClpP_2"/>
    <property type="match status" value="1"/>
</dbReference>
<dbReference type="FunFam" id="3.90.226.10:FF:000001">
    <property type="entry name" value="ATP-dependent Clp protease proteolytic subunit"/>
    <property type="match status" value="1"/>
</dbReference>
<dbReference type="Gene3D" id="3.90.226.10">
    <property type="entry name" value="2-enoyl-CoA Hydratase, Chain A, domain 1"/>
    <property type="match status" value="1"/>
</dbReference>
<dbReference type="HAMAP" id="MF_00444">
    <property type="entry name" value="ClpP"/>
    <property type="match status" value="1"/>
</dbReference>
<dbReference type="InterPro" id="IPR001907">
    <property type="entry name" value="ClpP"/>
</dbReference>
<dbReference type="InterPro" id="IPR029045">
    <property type="entry name" value="ClpP/crotonase-like_dom_sf"/>
</dbReference>
<dbReference type="InterPro" id="IPR023562">
    <property type="entry name" value="ClpP/TepA"/>
</dbReference>
<dbReference type="InterPro" id="IPR033135">
    <property type="entry name" value="ClpP_His_AS"/>
</dbReference>
<dbReference type="InterPro" id="IPR018215">
    <property type="entry name" value="ClpP_Ser_AS"/>
</dbReference>
<dbReference type="NCBIfam" id="TIGR00493">
    <property type="entry name" value="clpP"/>
    <property type="match status" value="1"/>
</dbReference>
<dbReference type="NCBIfam" id="NF001368">
    <property type="entry name" value="PRK00277.1"/>
    <property type="match status" value="1"/>
</dbReference>
<dbReference type="NCBIfam" id="NF009205">
    <property type="entry name" value="PRK12553.1"/>
    <property type="match status" value="1"/>
</dbReference>
<dbReference type="PANTHER" id="PTHR10381">
    <property type="entry name" value="ATP-DEPENDENT CLP PROTEASE PROTEOLYTIC SUBUNIT"/>
    <property type="match status" value="1"/>
</dbReference>
<dbReference type="PANTHER" id="PTHR10381:SF70">
    <property type="entry name" value="ATP-DEPENDENT CLP PROTEASE PROTEOLYTIC SUBUNIT"/>
    <property type="match status" value="1"/>
</dbReference>
<dbReference type="Pfam" id="PF00574">
    <property type="entry name" value="CLP_protease"/>
    <property type="match status" value="1"/>
</dbReference>
<dbReference type="PRINTS" id="PR00127">
    <property type="entry name" value="CLPPROTEASEP"/>
</dbReference>
<dbReference type="SUPFAM" id="SSF52096">
    <property type="entry name" value="ClpP/crotonase"/>
    <property type="match status" value="1"/>
</dbReference>
<dbReference type="PROSITE" id="PS00382">
    <property type="entry name" value="CLP_PROTEASE_HIS"/>
    <property type="match status" value="1"/>
</dbReference>
<dbReference type="PROSITE" id="PS00381">
    <property type="entry name" value="CLP_PROTEASE_SER"/>
    <property type="match status" value="1"/>
</dbReference>
<gene>
    <name evidence="1" type="primary">clpP2</name>
    <name type="ordered locus">mlr8472</name>
</gene>
<feature type="chain" id="PRO_0000179632" description="ATP-dependent Clp protease proteolytic subunit 2">
    <location>
        <begin position="1"/>
        <end position="209"/>
    </location>
</feature>
<feature type="active site" description="Nucleophile" evidence="1">
    <location>
        <position position="106"/>
    </location>
</feature>
<feature type="active site" evidence="1">
    <location>
        <position position="131"/>
    </location>
</feature>
<sequence>MKNPVETYMNLVPMVVEQTNRGERAYDIFSRLLKERIIFITGPVEDGMATLVCAQLLFLEAENPKKEINLYINSPGGVVTSGMAIYDTMQFIKPAVSTLCIGQAASMGSLLLTAGHKDMRFATPNARIMVHQPSGGFQGQASDIERHAMDIVKLKRRLNEVYVKHTGKSYEEIERTLDRDHFMTADEAKDFGLIDKVISSREPAESAVA</sequence>